<evidence type="ECO:0000250" key="1">
    <source>
        <dbReference type="UniProtKB" id="P36012"/>
    </source>
</evidence>
<evidence type="ECO:0000256" key="2">
    <source>
        <dbReference type="SAM" id="MobiDB-lite"/>
    </source>
</evidence>
<evidence type="ECO:0000305" key="3"/>
<accession>Q7RXR3</accession>
<feature type="chain" id="PRO_0000270600" description="Histone H3-like centromeric protein hH3v">
    <location>
        <begin position="1"/>
        <end position="155"/>
    </location>
</feature>
<feature type="region of interest" description="Disordered" evidence="2">
    <location>
        <begin position="1"/>
        <end position="56"/>
    </location>
</feature>
<feature type="region of interest" description="H3-like">
    <location>
        <begin position="45"/>
        <end position="148"/>
    </location>
</feature>
<feature type="compositionally biased region" description="Low complexity" evidence="2">
    <location>
        <begin position="1"/>
        <end position="24"/>
    </location>
</feature>
<dbReference type="EMBL" id="CM002238">
    <property type="protein sequence ID" value="EAA27422.1"/>
    <property type="molecule type" value="Genomic_DNA"/>
</dbReference>
<dbReference type="RefSeq" id="XP_956658.1">
    <property type="nucleotide sequence ID" value="XM_951565.2"/>
</dbReference>
<dbReference type="SMR" id="Q7RXR3"/>
<dbReference type="STRING" id="367110.Q7RXR3"/>
<dbReference type="PaxDb" id="5141-EFNCRP00000000104"/>
<dbReference type="EnsemblFungi" id="EAA27422">
    <property type="protein sequence ID" value="EAA27422"/>
    <property type="gene ID" value="NCU00145"/>
</dbReference>
<dbReference type="GeneID" id="3872805"/>
<dbReference type="KEGG" id="ncr:NCU00145"/>
<dbReference type="VEuPathDB" id="FungiDB:NCU00145"/>
<dbReference type="HOGENOM" id="CLU_078295_3_1_1"/>
<dbReference type="InParanoid" id="Q7RXR3"/>
<dbReference type="OrthoDB" id="842664at2759"/>
<dbReference type="Proteomes" id="UP000001805">
    <property type="component" value="Chromosome 3, Linkage Group III"/>
</dbReference>
<dbReference type="GO" id="GO:0005729">
    <property type="term" value="C:2-micrometer circle DNA"/>
    <property type="evidence" value="ECO:0007669"/>
    <property type="project" value="EnsemblFungi"/>
</dbReference>
<dbReference type="GO" id="GO:0043505">
    <property type="term" value="C:CENP-A containing nucleosome"/>
    <property type="evidence" value="ECO:0007669"/>
    <property type="project" value="EnsemblFungi"/>
</dbReference>
<dbReference type="GO" id="GO:0000776">
    <property type="term" value="C:kinetochore"/>
    <property type="evidence" value="ECO:0007669"/>
    <property type="project" value="EnsemblFungi"/>
</dbReference>
<dbReference type="GO" id="GO:0005634">
    <property type="term" value="C:nucleus"/>
    <property type="evidence" value="ECO:0000318"/>
    <property type="project" value="GO_Central"/>
</dbReference>
<dbReference type="GO" id="GO:0005777">
    <property type="term" value="C:peroxisome"/>
    <property type="evidence" value="ECO:0007669"/>
    <property type="project" value="EnsemblFungi"/>
</dbReference>
<dbReference type="GO" id="GO:0019237">
    <property type="term" value="F:centromeric DNA binding"/>
    <property type="evidence" value="ECO:0007669"/>
    <property type="project" value="EnsemblFungi"/>
</dbReference>
<dbReference type="GO" id="GO:0046982">
    <property type="term" value="F:protein heterodimerization activity"/>
    <property type="evidence" value="ECO:0007669"/>
    <property type="project" value="InterPro"/>
</dbReference>
<dbReference type="GO" id="GO:0030527">
    <property type="term" value="F:structural constituent of chromatin"/>
    <property type="evidence" value="ECO:0007669"/>
    <property type="project" value="InterPro"/>
</dbReference>
<dbReference type="GO" id="GO:0030543">
    <property type="term" value="P:2-micrometer plasmid partitioning"/>
    <property type="evidence" value="ECO:0007669"/>
    <property type="project" value="EnsemblFungi"/>
</dbReference>
<dbReference type="GO" id="GO:0051382">
    <property type="term" value="P:kinetochore assembly"/>
    <property type="evidence" value="ECO:0007669"/>
    <property type="project" value="EnsemblFungi"/>
</dbReference>
<dbReference type="GO" id="GO:0000070">
    <property type="term" value="P:mitotic sister chromatid segregation"/>
    <property type="evidence" value="ECO:0007669"/>
    <property type="project" value="EnsemblFungi"/>
</dbReference>
<dbReference type="GO" id="GO:0061644">
    <property type="term" value="P:protein localization to CENP-A containing chromatin"/>
    <property type="evidence" value="ECO:0007669"/>
    <property type="project" value="EnsemblFungi"/>
</dbReference>
<dbReference type="CDD" id="cd22911">
    <property type="entry name" value="HFD_H3"/>
    <property type="match status" value="1"/>
</dbReference>
<dbReference type="FunFam" id="1.10.20.10:FF:000140">
    <property type="entry name" value="Histone H3-like centromeric protein cse-4"/>
    <property type="match status" value="1"/>
</dbReference>
<dbReference type="Gene3D" id="1.10.20.10">
    <property type="entry name" value="Histone, subunit A"/>
    <property type="match status" value="1"/>
</dbReference>
<dbReference type="InterPro" id="IPR009072">
    <property type="entry name" value="Histone-fold"/>
</dbReference>
<dbReference type="InterPro" id="IPR007125">
    <property type="entry name" value="Histone_H2A/H2B/H3"/>
</dbReference>
<dbReference type="InterPro" id="IPR000164">
    <property type="entry name" value="Histone_H3/CENP-A"/>
</dbReference>
<dbReference type="PANTHER" id="PTHR45810:SF1">
    <property type="entry name" value="HISTONE H3-LIKE CENTROMERIC PROTEIN A"/>
    <property type="match status" value="1"/>
</dbReference>
<dbReference type="PANTHER" id="PTHR45810">
    <property type="entry name" value="HISTONE H3.2"/>
    <property type="match status" value="1"/>
</dbReference>
<dbReference type="Pfam" id="PF00125">
    <property type="entry name" value="Histone"/>
    <property type="match status" value="1"/>
</dbReference>
<dbReference type="PRINTS" id="PR00622">
    <property type="entry name" value="HISTONEH3"/>
</dbReference>
<dbReference type="SMART" id="SM00428">
    <property type="entry name" value="H3"/>
    <property type="match status" value="1"/>
</dbReference>
<dbReference type="SUPFAM" id="SSF47113">
    <property type="entry name" value="Histone-fold"/>
    <property type="match status" value="1"/>
</dbReference>
<dbReference type="PROSITE" id="PS00959">
    <property type="entry name" value="HISTONE_H3_2"/>
    <property type="match status" value="1"/>
</dbReference>
<name>CENPA_NEUCR</name>
<organism>
    <name type="scientific">Neurospora crassa (strain ATCC 24698 / 74-OR23-1A / CBS 708.71 / DSM 1257 / FGSC 987)</name>
    <dbReference type="NCBI Taxonomy" id="367110"/>
    <lineage>
        <taxon>Eukaryota</taxon>
        <taxon>Fungi</taxon>
        <taxon>Dikarya</taxon>
        <taxon>Ascomycota</taxon>
        <taxon>Pezizomycotina</taxon>
        <taxon>Sordariomycetes</taxon>
        <taxon>Sordariomycetidae</taxon>
        <taxon>Sordariales</taxon>
        <taxon>Sordariaceae</taxon>
        <taxon>Neurospora</taxon>
    </lineage>
</organism>
<comment type="function">
    <text evidence="1">Histone H3-like nucleosomal protein that is specifically found in centromeric nucleosomes. Replaces conventional H3 in the nucleosome core of centromeric chromatin that serves as an assembly site for the inner kinetochore. Required for recruitment and assembly of kinetochore proteins, mitotic progression and chromosome segregation. May serve as an epigenetic mark that propagates centromere identity through replication and cell division (By similarity).</text>
</comment>
<comment type="subunit">
    <text evidence="1">Component of centromeric nucleosomes, where DNA is wrapped around a histone octamer core. The octamer contains two molecules each of H2A, H2B, hH3v/CENPA and H4 assembled in one hH3v-H4 heterotetramer and two H2A-H2B heterodimers. Interacts with the inner kinetochore.</text>
</comment>
<comment type="subcellular location">
    <subcellularLocation>
        <location evidence="1">Nucleus</location>
    </subcellularLocation>
    <subcellularLocation>
        <location evidence="1">Chromosome</location>
        <location evidence="1">Centromere</location>
    </subcellularLocation>
</comment>
<comment type="PTM">
    <text evidence="1">Ubiquitinated. Is degraded through ubiquitin-mediated proteolysis when not protected by its association to the kinetochore.</text>
</comment>
<comment type="similarity">
    <text evidence="3">Belongs to the histone H3 family.</text>
</comment>
<keyword id="KW-0137">Centromere</keyword>
<keyword id="KW-0158">Chromosome</keyword>
<keyword id="KW-0238">DNA-binding</keyword>
<keyword id="KW-0544">Nucleosome core</keyword>
<keyword id="KW-0539">Nucleus</keyword>
<keyword id="KW-1185">Reference proteome</keyword>
<keyword id="KW-0832">Ubl conjugation</keyword>
<gene>
    <name type="primary">hH3v</name>
    <name type="synonym">cse4</name>
    <name type="ORF">NCU00145</name>
</gene>
<protein>
    <recommendedName>
        <fullName>Histone H3-like centromeric protein hH3v</fullName>
    </recommendedName>
    <alternativeName>
        <fullName>CENP-A homolog</fullName>
    </alternativeName>
    <alternativeName>
        <fullName evidence="3">CENPA homolog</fullName>
    </alternativeName>
</protein>
<proteinExistence type="inferred from homology"/>
<sequence>MPPKKGGVTKSKAVSKKAAAVPTPKATPPGRRKSRASSVQPGDPVPQGKKRRYRPGTLALKEIRNYQRTTDLLVAKLPFARLVREIAMQFRPMDEEMRWQSQAILALQEAAEAFLVHLFEDTNLCAIHAKRVTIMQKDIQLARRIRGVWGGAGWV</sequence>
<reference key="1">
    <citation type="journal article" date="2003" name="Nature">
        <title>The genome sequence of the filamentous fungus Neurospora crassa.</title>
        <authorList>
            <person name="Galagan J.E."/>
            <person name="Calvo S.E."/>
            <person name="Borkovich K.A."/>
            <person name="Selker E.U."/>
            <person name="Read N.D."/>
            <person name="Jaffe D.B."/>
            <person name="FitzHugh W."/>
            <person name="Ma L.-J."/>
            <person name="Smirnov S."/>
            <person name="Purcell S."/>
            <person name="Rehman B."/>
            <person name="Elkins T."/>
            <person name="Engels R."/>
            <person name="Wang S."/>
            <person name="Nielsen C.B."/>
            <person name="Butler J."/>
            <person name="Endrizzi M."/>
            <person name="Qui D."/>
            <person name="Ianakiev P."/>
            <person name="Bell-Pedersen D."/>
            <person name="Nelson M.A."/>
            <person name="Werner-Washburne M."/>
            <person name="Selitrennikoff C.P."/>
            <person name="Kinsey J.A."/>
            <person name="Braun E.L."/>
            <person name="Zelter A."/>
            <person name="Schulte U."/>
            <person name="Kothe G.O."/>
            <person name="Jedd G."/>
            <person name="Mewes H.-W."/>
            <person name="Staben C."/>
            <person name="Marcotte E."/>
            <person name="Greenberg D."/>
            <person name="Roy A."/>
            <person name="Foley K."/>
            <person name="Naylor J."/>
            <person name="Stange-Thomann N."/>
            <person name="Barrett R."/>
            <person name="Gnerre S."/>
            <person name="Kamal M."/>
            <person name="Kamvysselis M."/>
            <person name="Mauceli E.W."/>
            <person name="Bielke C."/>
            <person name="Rudd S."/>
            <person name="Frishman D."/>
            <person name="Krystofova S."/>
            <person name="Rasmussen C."/>
            <person name="Metzenberg R.L."/>
            <person name="Perkins D.D."/>
            <person name="Kroken S."/>
            <person name="Cogoni C."/>
            <person name="Macino G."/>
            <person name="Catcheside D.E.A."/>
            <person name="Li W."/>
            <person name="Pratt R.J."/>
            <person name="Osmani S.A."/>
            <person name="DeSouza C.P.C."/>
            <person name="Glass N.L."/>
            <person name="Orbach M.J."/>
            <person name="Berglund J.A."/>
            <person name="Voelker R."/>
            <person name="Yarden O."/>
            <person name="Plamann M."/>
            <person name="Seiler S."/>
            <person name="Dunlap J.C."/>
            <person name="Radford A."/>
            <person name="Aramayo R."/>
            <person name="Natvig D.O."/>
            <person name="Alex L.A."/>
            <person name="Mannhaupt G."/>
            <person name="Ebbole D.J."/>
            <person name="Freitag M."/>
            <person name="Paulsen I."/>
            <person name="Sachs M.S."/>
            <person name="Lander E.S."/>
            <person name="Nusbaum C."/>
            <person name="Birren B.W."/>
        </authorList>
    </citation>
    <scope>NUCLEOTIDE SEQUENCE [LARGE SCALE GENOMIC DNA]</scope>
    <source>
        <strain>ATCC 24698 / 74-OR23-1A / CBS 708.71 / DSM 1257 / FGSC 987</strain>
    </source>
</reference>